<accession>O50563</accession>
<keyword id="KW-0488">Methylation</keyword>
<keyword id="KW-0687">Ribonucleoprotein</keyword>
<keyword id="KW-0689">Ribosomal protein</keyword>
<keyword id="KW-0694">RNA-binding</keyword>
<keyword id="KW-0699">rRNA-binding</keyword>
<keyword id="KW-0820">tRNA-binding</keyword>
<evidence type="ECO:0000250" key="1"/>
<evidence type="ECO:0000255" key="2">
    <source>
        <dbReference type="HAMAP-Rule" id="MF_00403"/>
    </source>
</evidence>
<evidence type="ECO:0000256" key="3">
    <source>
        <dbReference type="SAM" id="MobiDB-lite"/>
    </source>
</evidence>
<evidence type="ECO:0000305" key="4"/>
<dbReference type="EMBL" id="U78300">
    <property type="protein sequence ID" value="AAB87731.1"/>
    <property type="molecule type" value="Genomic_DNA"/>
</dbReference>
<dbReference type="GO" id="GO:0015935">
    <property type="term" value="C:small ribosomal subunit"/>
    <property type="evidence" value="ECO:0007669"/>
    <property type="project" value="InterPro"/>
</dbReference>
<dbReference type="GO" id="GO:0019843">
    <property type="term" value="F:rRNA binding"/>
    <property type="evidence" value="ECO:0007669"/>
    <property type="project" value="UniProtKB-UniRule"/>
</dbReference>
<dbReference type="GO" id="GO:0003735">
    <property type="term" value="F:structural constituent of ribosome"/>
    <property type="evidence" value="ECO:0007669"/>
    <property type="project" value="InterPro"/>
</dbReference>
<dbReference type="GO" id="GO:0000049">
    <property type="term" value="F:tRNA binding"/>
    <property type="evidence" value="ECO:0007669"/>
    <property type="project" value="UniProtKB-UniRule"/>
</dbReference>
<dbReference type="GO" id="GO:0006412">
    <property type="term" value="P:translation"/>
    <property type="evidence" value="ECO:0007669"/>
    <property type="project" value="UniProtKB-UniRule"/>
</dbReference>
<dbReference type="CDD" id="cd03368">
    <property type="entry name" value="Ribosomal_S12"/>
    <property type="match status" value="1"/>
</dbReference>
<dbReference type="FunFam" id="2.40.50.140:FF:000001">
    <property type="entry name" value="30S ribosomal protein S12"/>
    <property type="match status" value="1"/>
</dbReference>
<dbReference type="Gene3D" id="2.40.50.140">
    <property type="entry name" value="Nucleic acid-binding proteins"/>
    <property type="match status" value="1"/>
</dbReference>
<dbReference type="HAMAP" id="MF_00403_B">
    <property type="entry name" value="Ribosomal_uS12_B"/>
    <property type="match status" value="1"/>
</dbReference>
<dbReference type="InterPro" id="IPR012340">
    <property type="entry name" value="NA-bd_OB-fold"/>
</dbReference>
<dbReference type="InterPro" id="IPR006032">
    <property type="entry name" value="Ribosomal_uS12"/>
</dbReference>
<dbReference type="InterPro" id="IPR005679">
    <property type="entry name" value="Ribosomal_uS12_bac"/>
</dbReference>
<dbReference type="NCBIfam" id="TIGR00981">
    <property type="entry name" value="rpsL_bact"/>
    <property type="match status" value="1"/>
</dbReference>
<dbReference type="PANTHER" id="PTHR11652">
    <property type="entry name" value="30S RIBOSOMAL PROTEIN S12 FAMILY MEMBER"/>
    <property type="match status" value="1"/>
</dbReference>
<dbReference type="Pfam" id="PF00164">
    <property type="entry name" value="Ribosom_S12_S23"/>
    <property type="match status" value="1"/>
</dbReference>
<dbReference type="PIRSF" id="PIRSF002133">
    <property type="entry name" value="Ribosomal_S12/S23"/>
    <property type="match status" value="1"/>
</dbReference>
<dbReference type="PRINTS" id="PR01034">
    <property type="entry name" value="RIBOSOMALS12"/>
</dbReference>
<dbReference type="SUPFAM" id="SSF50249">
    <property type="entry name" value="Nucleic acid-binding proteins"/>
    <property type="match status" value="1"/>
</dbReference>
<dbReference type="PROSITE" id="PS00055">
    <property type="entry name" value="RIBOSOMAL_S12"/>
    <property type="match status" value="1"/>
</dbReference>
<sequence>MPTINQLVRQGAXAETIKSKSAAMENSPQRRGVCTRVYTTTPKKPNSALRKVAKVPLTNGFEVISYIGGEGHNLQEHSVVLVRGGRVKDLPGVRYHIVRGSLDLQGVKDRKQSRSKYGAKRPKK</sequence>
<name>RS12_THIDL</name>
<protein>
    <recommendedName>
        <fullName evidence="2">Small ribosomal subunit protein uS12</fullName>
    </recommendedName>
    <alternativeName>
        <fullName evidence="4">30S ribosomal protein S12</fullName>
    </alternativeName>
</protein>
<gene>
    <name evidence="2" type="primary">rpsL</name>
</gene>
<proteinExistence type="inferred from homology"/>
<reference key="1">
    <citation type="submission" date="1996-11" db="EMBL/GenBank/DDBJ databases">
        <title>The str operon from the chemolithotrophic bacterium Thiobacillus cuprinus.</title>
        <authorList>
            <person name="Moreira D."/>
            <person name="Amils R."/>
        </authorList>
    </citation>
    <scope>NUCLEOTIDE SEQUENCE [GENOMIC DNA]</scope>
    <source>
        <strain>DSM 5495 / NBRC 102094 / Hoe5</strain>
    </source>
</reference>
<organism>
    <name type="scientific">Thiomonas delicata</name>
    <name type="common">Thiomonas cuprina</name>
    <dbReference type="NCBI Taxonomy" id="364030"/>
    <lineage>
        <taxon>Bacteria</taxon>
        <taxon>Pseudomonadati</taxon>
        <taxon>Pseudomonadota</taxon>
        <taxon>Betaproteobacteria</taxon>
        <taxon>Burkholderiales</taxon>
        <taxon>Thiomonas</taxon>
    </lineage>
</organism>
<comment type="function">
    <text evidence="2">With S4 and S5 plays an important role in translational accuracy.</text>
</comment>
<comment type="function">
    <text evidence="2">Interacts with and stabilizes bases of the 16S rRNA that are involved in tRNA selection in the A site and with the mRNA backbone. Located at the interface of the 30S and 50S subunits, it traverses the body of the 30S subunit contacting proteins on the other side and probably holding the rRNA structure together. The combined cluster of proteins S8, S12 and S17 appears to hold together the shoulder and platform of the 30S subunit.</text>
</comment>
<comment type="subunit">
    <text evidence="2">Part of the 30S ribosomal subunit. Contacts proteins S8 and S17. May interact with IF1 in the 30S initiation complex.</text>
</comment>
<comment type="similarity">
    <text evidence="2">Belongs to the universal ribosomal protein uS12 family.</text>
</comment>
<feature type="chain" id="PRO_0000146344" description="Small ribosomal subunit protein uS12">
    <location>
        <begin position="1"/>
        <end position="124"/>
    </location>
</feature>
<feature type="region of interest" description="Disordered" evidence="3">
    <location>
        <begin position="104"/>
        <end position="124"/>
    </location>
</feature>
<feature type="compositionally biased region" description="Basic residues" evidence="3">
    <location>
        <begin position="113"/>
        <end position="124"/>
    </location>
</feature>
<feature type="modified residue" description="3-methylthioaspartic acid" evidence="1">
    <location>
        <position position="89"/>
    </location>
</feature>